<dbReference type="EC" id="2.7.1.33" evidence="1"/>
<dbReference type="EMBL" id="CP000857">
    <property type="protein sequence ID" value="ACN48044.1"/>
    <property type="molecule type" value="Genomic_DNA"/>
</dbReference>
<dbReference type="RefSeq" id="WP_000023069.1">
    <property type="nucleotide sequence ID" value="NC_012125.1"/>
</dbReference>
<dbReference type="SMR" id="C0Q2Q8"/>
<dbReference type="KEGG" id="sei:SPC_3976"/>
<dbReference type="HOGENOM" id="CLU_053818_1_1_6"/>
<dbReference type="UniPathway" id="UPA00241">
    <property type="reaction ID" value="UER00352"/>
</dbReference>
<dbReference type="Proteomes" id="UP000001599">
    <property type="component" value="Chromosome"/>
</dbReference>
<dbReference type="GO" id="GO:0005737">
    <property type="term" value="C:cytoplasm"/>
    <property type="evidence" value="ECO:0007669"/>
    <property type="project" value="UniProtKB-SubCell"/>
</dbReference>
<dbReference type="GO" id="GO:0005524">
    <property type="term" value="F:ATP binding"/>
    <property type="evidence" value="ECO:0007669"/>
    <property type="project" value="UniProtKB-UniRule"/>
</dbReference>
<dbReference type="GO" id="GO:0004594">
    <property type="term" value="F:pantothenate kinase activity"/>
    <property type="evidence" value="ECO:0007669"/>
    <property type="project" value="UniProtKB-UniRule"/>
</dbReference>
<dbReference type="GO" id="GO:0015937">
    <property type="term" value="P:coenzyme A biosynthetic process"/>
    <property type="evidence" value="ECO:0007669"/>
    <property type="project" value="UniProtKB-UniRule"/>
</dbReference>
<dbReference type="CDD" id="cd02025">
    <property type="entry name" value="PanK"/>
    <property type="match status" value="1"/>
</dbReference>
<dbReference type="FunFam" id="3.40.50.300:FF:000242">
    <property type="entry name" value="Pantothenate kinase"/>
    <property type="match status" value="1"/>
</dbReference>
<dbReference type="Gene3D" id="3.40.50.300">
    <property type="entry name" value="P-loop containing nucleotide triphosphate hydrolases"/>
    <property type="match status" value="1"/>
</dbReference>
<dbReference type="HAMAP" id="MF_00215">
    <property type="entry name" value="Pantothen_kinase_1"/>
    <property type="match status" value="1"/>
</dbReference>
<dbReference type="InterPro" id="IPR027417">
    <property type="entry name" value="P-loop_NTPase"/>
</dbReference>
<dbReference type="InterPro" id="IPR004566">
    <property type="entry name" value="PanK"/>
</dbReference>
<dbReference type="InterPro" id="IPR006083">
    <property type="entry name" value="PRK/URK"/>
</dbReference>
<dbReference type="NCBIfam" id="TIGR00554">
    <property type="entry name" value="panK_bact"/>
    <property type="match status" value="1"/>
</dbReference>
<dbReference type="PANTHER" id="PTHR10285">
    <property type="entry name" value="URIDINE KINASE"/>
    <property type="match status" value="1"/>
</dbReference>
<dbReference type="Pfam" id="PF00485">
    <property type="entry name" value="PRK"/>
    <property type="match status" value="1"/>
</dbReference>
<dbReference type="PIRSF" id="PIRSF000545">
    <property type="entry name" value="Pantothenate_kin"/>
    <property type="match status" value="1"/>
</dbReference>
<dbReference type="SUPFAM" id="SSF52540">
    <property type="entry name" value="P-loop containing nucleoside triphosphate hydrolases"/>
    <property type="match status" value="1"/>
</dbReference>
<proteinExistence type="inferred from homology"/>
<gene>
    <name evidence="1" type="primary">coaA</name>
    <name type="ordered locus">SPC_3976</name>
</gene>
<sequence>MSIKEQSLMTPYLQFDRSQWAALRDSVPMTLTEDEIAQLKGINEDLSLEEVAEIYLPLSRLLNFYISSNLRRQAVLEQFLGTNGQRIPYIISIAGSVAVGKSTTARVLQALLSRWPEHRRVELITTDGFLHPNQVLKERGLMKKKGFPESYDMHRLVKFVSDLKSGVPNVTAPVYSHLIYDVIPEGDKTVAQPDILILEGLNVLQSGMDYPHDPHHVFVSDFVDFSIYVDAPEELLQTWYINRFLKFREGAFTDPDSYFHNYAKLSKEEAVNTATSLWKEINWLNLKQNILPTRERASLIMTKSANHAVEQVRLRK</sequence>
<evidence type="ECO:0000255" key="1">
    <source>
        <dbReference type="HAMAP-Rule" id="MF_00215"/>
    </source>
</evidence>
<reference key="1">
    <citation type="journal article" date="2009" name="PLoS ONE">
        <title>Salmonella paratyphi C: genetic divergence from Salmonella choleraesuis and pathogenic convergence with Salmonella typhi.</title>
        <authorList>
            <person name="Liu W.-Q."/>
            <person name="Feng Y."/>
            <person name="Wang Y."/>
            <person name="Zou Q.-H."/>
            <person name="Chen F."/>
            <person name="Guo J.-T."/>
            <person name="Peng Y.-H."/>
            <person name="Jin Y."/>
            <person name="Li Y.-G."/>
            <person name="Hu S.-N."/>
            <person name="Johnston R.N."/>
            <person name="Liu G.-R."/>
            <person name="Liu S.-L."/>
        </authorList>
    </citation>
    <scope>NUCLEOTIDE SEQUENCE [LARGE SCALE GENOMIC DNA]</scope>
    <source>
        <strain>RKS4594</strain>
    </source>
</reference>
<keyword id="KW-0067">ATP-binding</keyword>
<keyword id="KW-0173">Coenzyme A biosynthesis</keyword>
<keyword id="KW-0963">Cytoplasm</keyword>
<keyword id="KW-0418">Kinase</keyword>
<keyword id="KW-0547">Nucleotide-binding</keyword>
<keyword id="KW-0808">Transferase</keyword>
<organism>
    <name type="scientific">Salmonella paratyphi C (strain RKS4594)</name>
    <dbReference type="NCBI Taxonomy" id="476213"/>
    <lineage>
        <taxon>Bacteria</taxon>
        <taxon>Pseudomonadati</taxon>
        <taxon>Pseudomonadota</taxon>
        <taxon>Gammaproteobacteria</taxon>
        <taxon>Enterobacterales</taxon>
        <taxon>Enterobacteriaceae</taxon>
        <taxon>Salmonella</taxon>
    </lineage>
</organism>
<accession>C0Q2Q8</accession>
<name>COAA_SALPC</name>
<protein>
    <recommendedName>
        <fullName evidence="1">Pantothenate kinase</fullName>
        <ecNumber evidence="1">2.7.1.33</ecNumber>
    </recommendedName>
    <alternativeName>
        <fullName evidence="1">Pantothenic acid kinase</fullName>
    </alternativeName>
</protein>
<feature type="chain" id="PRO_1000124805" description="Pantothenate kinase">
    <location>
        <begin position="1"/>
        <end position="316"/>
    </location>
</feature>
<feature type="binding site" evidence="1">
    <location>
        <begin position="95"/>
        <end position="102"/>
    </location>
    <ligand>
        <name>ATP</name>
        <dbReference type="ChEBI" id="CHEBI:30616"/>
    </ligand>
</feature>
<comment type="catalytic activity">
    <reaction evidence="1">
        <text>(R)-pantothenate + ATP = (R)-4'-phosphopantothenate + ADP + H(+)</text>
        <dbReference type="Rhea" id="RHEA:16373"/>
        <dbReference type="ChEBI" id="CHEBI:10986"/>
        <dbReference type="ChEBI" id="CHEBI:15378"/>
        <dbReference type="ChEBI" id="CHEBI:29032"/>
        <dbReference type="ChEBI" id="CHEBI:30616"/>
        <dbReference type="ChEBI" id="CHEBI:456216"/>
        <dbReference type="EC" id="2.7.1.33"/>
    </reaction>
</comment>
<comment type="pathway">
    <text evidence="1">Cofactor biosynthesis; coenzyme A biosynthesis; CoA from (R)-pantothenate: step 1/5.</text>
</comment>
<comment type="subcellular location">
    <subcellularLocation>
        <location evidence="1">Cytoplasm</location>
    </subcellularLocation>
</comment>
<comment type="similarity">
    <text evidence="1">Belongs to the prokaryotic pantothenate kinase family.</text>
</comment>